<comment type="function">
    <text evidence="6 7 8">Phosphorylates specifically 'Ser-10' of histone H3 in vitro and colocalizes with phosphorylated histone H3 during mitosis. Associates with cytoskeletal structures that are necessary for cytokinesis and with the microtubule spindle. Also colocalizes with gamma-tubulin and function in microtubule organizing centers (MTOCs). In contrast with the mammalian B-type Aurora, AUR1 has no kinase activity toward 'Ser-28' of histone H3.</text>
</comment>
<comment type="catalytic activity">
    <reaction>
        <text>L-seryl-[protein] + ATP = O-phospho-L-seryl-[protein] + ADP + H(+)</text>
        <dbReference type="Rhea" id="RHEA:17989"/>
        <dbReference type="Rhea" id="RHEA-COMP:9863"/>
        <dbReference type="Rhea" id="RHEA-COMP:11604"/>
        <dbReference type="ChEBI" id="CHEBI:15378"/>
        <dbReference type="ChEBI" id="CHEBI:29999"/>
        <dbReference type="ChEBI" id="CHEBI:30616"/>
        <dbReference type="ChEBI" id="CHEBI:83421"/>
        <dbReference type="ChEBI" id="CHEBI:456216"/>
        <dbReference type="EC" id="2.7.11.1"/>
    </reaction>
</comment>
<comment type="catalytic activity">
    <reaction>
        <text>L-threonyl-[protein] + ATP = O-phospho-L-threonyl-[protein] + ADP + H(+)</text>
        <dbReference type="Rhea" id="RHEA:46608"/>
        <dbReference type="Rhea" id="RHEA-COMP:11060"/>
        <dbReference type="Rhea" id="RHEA-COMP:11605"/>
        <dbReference type="ChEBI" id="CHEBI:15378"/>
        <dbReference type="ChEBI" id="CHEBI:30013"/>
        <dbReference type="ChEBI" id="CHEBI:30616"/>
        <dbReference type="ChEBI" id="CHEBI:61977"/>
        <dbReference type="ChEBI" id="CHEBI:456216"/>
        <dbReference type="EC" id="2.7.11.1"/>
    </reaction>
</comment>
<comment type="subunit">
    <text evidence="8">Interacts with TPX2.</text>
</comment>
<comment type="subcellular location">
    <subcellularLocation>
        <location>Nucleus membrane</location>
    </subcellularLocation>
    <subcellularLocation>
        <location>Cytoplasm</location>
        <location>Cytoskeleton</location>
        <location>Spindle</location>
    </subcellularLocation>
    <subcellularLocation>
        <location>Cytoplasm</location>
        <location>Cytoskeleton</location>
        <location>Spindle pole</location>
    </subcellularLocation>
    <subcellularLocation>
        <location>Cytoplasm</location>
        <location>Cytoskeleton</location>
        <location>Phragmoplast</location>
    </subcellularLocation>
    <text>Nuclear membrane in interphase cells, spindle poles at prophase, mitotic spindle from metaphase to telophase and equatorial cell plate at telophase.</text>
</comment>
<comment type="tissue specificity">
    <text evidence="6">Abundant in roots, flowers and flower buds, low or absent in expanded leaves, stems and siliques.</text>
</comment>
<comment type="developmental stage">
    <text evidence="6">Peak of expression at mitosis.</text>
</comment>
<comment type="PTM">
    <text evidence="1">Phosphorylation at Thr-185 may regulate activity and degradation of AUR1 in a cell cycle dependent manner.</text>
</comment>
<comment type="similarity">
    <text evidence="4">Belongs to the protein kinase superfamily. Ser/Thr protein kinase family. Aurora subfamily.</text>
</comment>
<name>AUR1_ARATH</name>
<accession>Q9M077</accession>
<accession>Q8LBX4</accession>
<evidence type="ECO:0000250" key="1"/>
<evidence type="ECO:0000250" key="2">
    <source>
        <dbReference type="UniProtKB" id="Q38997"/>
    </source>
</evidence>
<evidence type="ECO:0000250" key="3">
    <source>
        <dbReference type="UniProtKB" id="Q93V58"/>
    </source>
</evidence>
<evidence type="ECO:0000255" key="4">
    <source>
        <dbReference type="PROSITE-ProRule" id="PRU00159"/>
    </source>
</evidence>
<evidence type="ECO:0000255" key="5">
    <source>
        <dbReference type="PROSITE-ProRule" id="PRU10027"/>
    </source>
</evidence>
<evidence type="ECO:0000269" key="6">
    <source>
    </source>
</evidence>
<evidence type="ECO:0000269" key="7">
    <source>
    </source>
</evidence>
<evidence type="ECO:0000269" key="8">
    <source>
    </source>
</evidence>
<feature type="chain" id="PRO_0000270792" description="Serine/threonine-protein kinase Aurora-1">
    <location>
        <begin position="1"/>
        <end position="294"/>
    </location>
</feature>
<feature type="domain" description="Protein kinase" evidence="4">
    <location>
        <begin position="31"/>
        <end position="282"/>
    </location>
</feature>
<feature type="active site" description="Proton acceptor" evidence="4 5">
    <location>
        <position position="154"/>
    </location>
</feature>
<feature type="binding site" evidence="4">
    <location>
        <begin position="37"/>
        <end position="45"/>
    </location>
    <ligand>
        <name>ATP</name>
        <dbReference type="ChEBI" id="CHEBI:30616"/>
    </ligand>
</feature>
<feature type="binding site" evidence="4">
    <location>
        <position position="60"/>
    </location>
    <ligand>
        <name>ATP</name>
        <dbReference type="ChEBI" id="CHEBI:30616"/>
    </ligand>
</feature>
<feature type="modified residue" description="Phosphoserine" evidence="3">
    <location>
        <position position="176"/>
    </location>
</feature>
<feature type="modified residue" description="Phosphothreonine" evidence="2">
    <location>
        <position position="185"/>
    </location>
</feature>
<protein>
    <recommendedName>
        <fullName>Serine/threonine-protein kinase Aurora-1</fullName>
        <shortName>AtAur1</shortName>
        <ecNumber>2.7.11.1</ecNumber>
    </recommendedName>
    <alternativeName>
        <fullName>Aurora-like kinase 1</fullName>
    </alternativeName>
</protein>
<gene>
    <name type="primary">AUR1</name>
    <name type="ordered locus">At4g32830</name>
    <name type="ORF">T16I18.40</name>
</gene>
<dbReference type="EC" id="2.7.11.1"/>
<dbReference type="EMBL" id="AB196733">
    <property type="protein sequence ID" value="BAE00019.1"/>
    <property type="molecule type" value="Genomic_DNA"/>
</dbReference>
<dbReference type="EMBL" id="AJ854183">
    <property type="protein sequence ID" value="CAH69532.1"/>
    <property type="molecule type" value="mRNA"/>
</dbReference>
<dbReference type="EMBL" id="AL161582">
    <property type="protein sequence ID" value="CAB80000.1"/>
    <property type="molecule type" value="Genomic_DNA"/>
</dbReference>
<dbReference type="EMBL" id="CP002687">
    <property type="protein sequence ID" value="AEE86124.1"/>
    <property type="molecule type" value="Genomic_DNA"/>
</dbReference>
<dbReference type="EMBL" id="AY086942">
    <property type="protein sequence ID" value="AAM64506.1"/>
    <property type="molecule type" value="mRNA"/>
</dbReference>
<dbReference type="EMBL" id="AK221608">
    <property type="protein sequence ID" value="BAD95178.1"/>
    <property type="molecule type" value="mRNA"/>
</dbReference>
<dbReference type="PIR" id="T10690">
    <property type="entry name" value="T10690"/>
</dbReference>
<dbReference type="RefSeq" id="NP_195009.1">
    <property type="nucleotide sequence ID" value="NM_119436.3"/>
</dbReference>
<dbReference type="SMR" id="Q9M077"/>
<dbReference type="BioGRID" id="14704">
    <property type="interactions" value="2"/>
</dbReference>
<dbReference type="FunCoup" id="Q9M077">
    <property type="interactions" value="2625"/>
</dbReference>
<dbReference type="STRING" id="3702.Q9M077"/>
<dbReference type="iPTMnet" id="Q9M077"/>
<dbReference type="PaxDb" id="3702-AT4G32830.1"/>
<dbReference type="ProteomicsDB" id="241150"/>
<dbReference type="EnsemblPlants" id="AT4G32830.1">
    <property type="protein sequence ID" value="AT4G32830.1"/>
    <property type="gene ID" value="AT4G32830"/>
</dbReference>
<dbReference type="GeneID" id="829419"/>
<dbReference type="Gramene" id="AT4G32830.1">
    <property type="protein sequence ID" value="AT4G32830.1"/>
    <property type="gene ID" value="AT4G32830"/>
</dbReference>
<dbReference type="KEGG" id="ath:AT4G32830"/>
<dbReference type="Araport" id="AT4G32830"/>
<dbReference type="TAIR" id="AT4G32830">
    <property type="gene designation" value="AUR1"/>
</dbReference>
<dbReference type="eggNOG" id="KOG0580">
    <property type="taxonomic scope" value="Eukaryota"/>
</dbReference>
<dbReference type="HOGENOM" id="CLU_000288_63_0_1"/>
<dbReference type="InParanoid" id="Q9M077"/>
<dbReference type="OMA" id="AVDQKRW"/>
<dbReference type="OrthoDB" id="377346at2759"/>
<dbReference type="PhylomeDB" id="Q9M077"/>
<dbReference type="CD-CODE" id="33FCD62D">
    <property type="entry name" value="Centrosome"/>
</dbReference>
<dbReference type="PRO" id="PR:Q9M077"/>
<dbReference type="Proteomes" id="UP000006548">
    <property type="component" value="Chromosome 4"/>
</dbReference>
<dbReference type="ExpressionAtlas" id="Q9M077">
    <property type="expression patterns" value="baseline and differential"/>
</dbReference>
<dbReference type="GO" id="GO:0009504">
    <property type="term" value="C:cell plate"/>
    <property type="evidence" value="ECO:0000314"/>
    <property type="project" value="TAIR"/>
</dbReference>
<dbReference type="GO" id="GO:0005874">
    <property type="term" value="C:microtubule"/>
    <property type="evidence" value="ECO:0000314"/>
    <property type="project" value="TAIR"/>
</dbReference>
<dbReference type="GO" id="GO:0031965">
    <property type="term" value="C:nuclear membrane"/>
    <property type="evidence" value="ECO:0007669"/>
    <property type="project" value="UniProtKB-SubCell"/>
</dbReference>
<dbReference type="GO" id="GO:0005730">
    <property type="term" value="C:nucleolus"/>
    <property type="evidence" value="ECO:0007005"/>
    <property type="project" value="TAIR"/>
</dbReference>
<dbReference type="GO" id="GO:0005634">
    <property type="term" value="C:nucleus"/>
    <property type="evidence" value="ECO:0000314"/>
    <property type="project" value="TAIR"/>
</dbReference>
<dbReference type="GO" id="GO:0009524">
    <property type="term" value="C:phragmoplast"/>
    <property type="evidence" value="ECO:0007669"/>
    <property type="project" value="UniProtKB-SubCell"/>
</dbReference>
<dbReference type="GO" id="GO:0005819">
    <property type="term" value="C:spindle"/>
    <property type="evidence" value="ECO:0007005"/>
    <property type="project" value="TAIR"/>
</dbReference>
<dbReference type="GO" id="GO:0000922">
    <property type="term" value="C:spindle pole"/>
    <property type="evidence" value="ECO:0007669"/>
    <property type="project" value="UniProtKB-SubCell"/>
</dbReference>
<dbReference type="GO" id="GO:0005524">
    <property type="term" value="F:ATP binding"/>
    <property type="evidence" value="ECO:0007669"/>
    <property type="project" value="UniProtKB-KW"/>
</dbReference>
<dbReference type="GO" id="GO:0035175">
    <property type="term" value="F:histone H3S10 kinase activity"/>
    <property type="evidence" value="ECO:0000314"/>
    <property type="project" value="TAIR"/>
</dbReference>
<dbReference type="GO" id="GO:0106310">
    <property type="term" value="F:protein serine kinase activity"/>
    <property type="evidence" value="ECO:0007669"/>
    <property type="project" value="RHEA"/>
</dbReference>
<dbReference type="GO" id="GO:0004674">
    <property type="term" value="F:protein serine/threonine kinase activity"/>
    <property type="evidence" value="ECO:0000314"/>
    <property type="project" value="TAIR"/>
</dbReference>
<dbReference type="GO" id="GO:0051301">
    <property type="term" value="P:cell division"/>
    <property type="evidence" value="ECO:0007669"/>
    <property type="project" value="UniProtKB-KW"/>
</dbReference>
<dbReference type="CDD" id="cd14007">
    <property type="entry name" value="STKc_Aurora"/>
    <property type="match status" value="1"/>
</dbReference>
<dbReference type="FunFam" id="3.30.200.20:FF:000042">
    <property type="entry name" value="Aurora kinase A"/>
    <property type="match status" value="1"/>
</dbReference>
<dbReference type="FunFam" id="1.10.510.10:FF:000385">
    <property type="entry name" value="serine/threonine-protein kinase Aurora-1"/>
    <property type="match status" value="1"/>
</dbReference>
<dbReference type="Gene3D" id="3.30.200.20">
    <property type="entry name" value="Phosphorylase Kinase, domain 1"/>
    <property type="match status" value="1"/>
</dbReference>
<dbReference type="Gene3D" id="1.10.510.10">
    <property type="entry name" value="Transferase(Phosphotransferase) domain 1"/>
    <property type="match status" value="1"/>
</dbReference>
<dbReference type="InterPro" id="IPR030616">
    <property type="entry name" value="Aur-like"/>
</dbReference>
<dbReference type="InterPro" id="IPR011009">
    <property type="entry name" value="Kinase-like_dom_sf"/>
</dbReference>
<dbReference type="InterPro" id="IPR000719">
    <property type="entry name" value="Prot_kinase_dom"/>
</dbReference>
<dbReference type="InterPro" id="IPR017441">
    <property type="entry name" value="Protein_kinase_ATP_BS"/>
</dbReference>
<dbReference type="InterPro" id="IPR008271">
    <property type="entry name" value="Ser/Thr_kinase_AS"/>
</dbReference>
<dbReference type="PANTHER" id="PTHR24350">
    <property type="entry name" value="SERINE/THREONINE-PROTEIN KINASE IAL-RELATED"/>
    <property type="match status" value="1"/>
</dbReference>
<dbReference type="Pfam" id="PF00069">
    <property type="entry name" value="Pkinase"/>
    <property type="match status" value="1"/>
</dbReference>
<dbReference type="PIRSF" id="PIRSF000654">
    <property type="entry name" value="Integrin-linked_kinase"/>
    <property type="match status" value="1"/>
</dbReference>
<dbReference type="SMART" id="SM00220">
    <property type="entry name" value="S_TKc"/>
    <property type="match status" value="1"/>
</dbReference>
<dbReference type="SUPFAM" id="SSF56112">
    <property type="entry name" value="Protein kinase-like (PK-like)"/>
    <property type="match status" value="1"/>
</dbReference>
<dbReference type="PROSITE" id="PS00107">
    <property type="entry name" value="PROTEIN_KINASE_ATP"/>
    <property type="match status" value="1"/>
</dbReference>
<dbReference type="PROSITE" id="PS50011">
    <property type="entry name" value="PROTEIN_KINASE_DOM"/>
    <property type="match status" value="1"/>
</dbReference>
<dbReference type="PROSITE" id="PS00108">
    <property type="entry name" value="PROTEIN_KINASE_ST"/>
    <property type="match status" value="1"/>
</dbReference>
<proteinExistence type="evidence at protein level"/>
<reference key="1">
    <citation type="journal article" date="2005" name="Plant Mol. Biol.">
        <title>Characterization of plant Aurora kinases during mitosis.</title>
        <authorList>
            <person name="Kawabe A."/>
            <person name="Matsunaga S."/>
            <person name="Nakagawa K."/>
            <person name="Kurihara D."/>
            <person name="Yoneda A."/>
            <person name="Hasezawa S."/>
            <person name="Uchiyama S."/>
            <person name="Fukui K."/>
        </authorList>
    </citation>
    <scope>NUCLEOTIDE SEQUENCE [GENOMIC DNA]</scope>
    <scope>FUNCTION</scope>
    <scope>SUBCELLULAR LOCATION</scope>
    <source>
        <strain>cv. Columbia</strain>
    </source>
</reference>
<reference key="2">
    <citation type="journal article" date="2005" name="Plant Cell">
        <title>Identification and dynamics of two classes of aurora-like kinases in Arabidopsis and other plants.</title>
        <authorList>
            <person name="Demidov D."/>
            <person name="Van Damme D."/>
            <person name="Geelen D."/>
            <person name="Blattner F.R."/>
            <person name="Houben A."/>
        </authorList>
    </citation>
    <scope>NUCLEOTIDE SEQUENCE [MRNA]</scope>
    <scope>FUNCTION</scope>
    <scope>SUBCELLULAR LOCATION</scope>
    <scope>DEVELOPMENTAL STAGE</scope>
    <scope>TISSUE SPECIFICITY</scope>
    <source>
        <strain>cv. Columbia</strain>
    </source>
</reference>
<reference key="3">
    <citation type="journal article" date="1999" name="Nature">
        <title>Sequence and analysis of chromosome 4 of the plant Arabidopsis thaliana.</title>
        <authorList>
            <person name="Mayer K.F.X."/>
            <person name="Schueller C."/>
            <person name="Wambutt R."/>
            <person name="Murphy G."/>
            <person name="Volckaert G."/>
            <person name="Pohl T."/>
            <person name="Duesterhoeft A."/>
            <person name="Stiekema W."/>
            <person name="Entian K.-D."/>
            <person name="Terryn N."/>
            <person name="Harris B."/>
            <person name="Ansorge W."/>
            <person name="Brandt P."/>
            <person name="Grivell L.A."/>
            <person name="Rieger M."/>
            <person name="Weichselgartner M."/>
            <person name="de Simone V."/>
            <person name="Obermaier B."/>
            <person name="Mache R."/>
            <person name="Mueller M."/>
            <person name="Kreis M."/>
            <person name="Delseny M."/>
            <person name="Puigdomenech P."/>
            <person name="Watson M."/>
            <person name="Schmidtheini T."/>
            <person name="Reichert B."/>
            <person name="Portetelle D."/>
            <person name="Perez-Alonso M."/>
            <person name="Boutry M."/>
            <person name="Bancroft I."/>
            <person name="Vos P."/>
            <person name="Hoheisel J."/>
            <person name="Zimmermann W."/>
            <person name="Wedler H."/>
            <person name="Ridley P."/>
            <person name="Langham S.-A."/>
            <person name="McCullagh B."/>
            <person name="Bilham L."/>
            <person name="Robben J."/>
            <person name="van der Schueren J."/>
            <person name="Grymonprez B."/>
            <person name="Chuang Y.-J."/>
            <person name="Vandenbussche F."/>
            <person name="Braeken M."/>
            <person name="Weltjens I."/>
            <person name="Voet M."/>
            <person name="Bastiaens I."/>
            <person name="Aert R."/>
            <person name="Defoor E."/>
            <person name="Weitzenegger T."/>
            <person name="Bothe G."/>
            <person name="Ramsperger U."/>
            <person name="Hilbert H."/>
            <person name="Braun M."/>
            <person name="Holzer E."/>
            <person name="Brandt A."/>
            <person name="Peters S."/>
            <person name="van Staveren M."/>
            <person name="Dirkse W."/>
            <person name="Mooijman P."/>
            <person name="Klein Lankhorst R."/>
            <person name="Rose M."/>
            <person name="Hauf J."/>
            <person name="Koetter P."/>
            <person name="Berneiser S."/>
            <person name="Hempel S."/>
            <person name="Feldpausch M."/>
            <person name="Lamberth S."/>
            <person name="Van den Daele H."/>
            <person name="De Keyser A."/>
            <person name="Buysshaert C."/>
            <person name="Gielen J."/>
            <person name="Villarroel R."/>
            <person name="De Clercq R."/>
            <person name="van Montagu M."/>
            <person name="Rogers J."/>
            <person name="Cronin A."/>
            <person name="Quail M.A."/>
            <person name="Bray-Allen S."/>
            <person name="Clark L."/>
            <person name="Doggett J."/>
            <person name="Hall S."/>
            <person name="Kay M."/>
            <person name="Lennard N."/>
            <person name="McLay K."/>
            <person name="Mayes R."/>
            <person name="Pettett A."/>
            <person name="Rajandream M.A."/>
            <person name="Lyne M."/>
            <person name="Benes V."/>
            <person name="Rechmann S."/>
            <person name="Borkova D."/>
            <person name="Bloecker H."/>
            <person name="Scharfe M."/>
            <person name="Grimm M."/>
            <person name="Loehnert T.-H."/>
            <person name="Dose S."/>
            <person name="de Haan M."/>
            <person name="Maarse A.C."/>
            <person name="Schaefer M."/>
            <person name="Mueller-Auer S."/>
            <person name="Gabel C."/>
            <person name="Fuchs M."/>
            <person name="Fartmann B."/>
            <person name="Granderath K."/>
            <person name="Dauner D."/>
            <person name="Herzl A."/>
            <person name="Neumann S."/>
            <person name="Argiriou A."/>
            <person name="Vitale D."/>
            <person name="Liguori R."/>
            <person name="Piravandi E."/>
            <person name="Massenet O."/>
            <person name="Quigley F."/>
            <person name="Clabauld G."/>
            <person name="Muendlein A."/>
            <person name="Felber R."/>
            <person name="Schnabl S."/>
            <person name="Hiller R."/>
            <person name="Schmidt W."/>
            <person name="Lecharny A."/>
            <person name="Aubourg S."/>
            <person name="Chefdor F."/>
            <person name="Cooke R."/>
            <person name="Berger C."/>
            <person name="Monfort A."/>
            <person name="Casacuberta E."/>
            <person name="Gibbons T."/>
            <person name="Weber N."/>
            <person name="Vandenbol M."/>
            <person name="Bargues M."/>
            <person name="Terol J."/>
            <person name="Torres A."/>
            <person name="Perez-Perez A."/>
            <person name="Purnelle B."/>
            <person name="Bent E."/>
            <person name="Johnson S."/>
            <person name="Tacon D."/>
            <person name="Jesse T."/>
            <person name="Heijnen L."/>
            <person name="Schwarz S."/>
            <person name="Scholler P."/>
            <person name="Heber S."/>
            <person name="Francs P."/>
            <person name="Bielke C."/>
            <person name="Frishman D."/>
            <person name="Haase D."/>
            <person name="Lemcke K."/>
            <person name="Mewes H.-W."/>
            <person name="Stocker S."/>
            <person name="Zaccaria P."/>
            <person name="Bevan M."/>
            <person name="Wilson R.K."/>
            <person name="de la Bastide M."/>
            <person name="Habermann K."/>
            <person name="Parnell L."/>
            <person name="Dedhia N."/>
            <person name="Gnoj L."/>
            <person name="Schutz K."/>
            <person name="Huang E."/>
            <person name="Spiegel L."/>
            <person name="Sekhon M."/>
            <person name="Murray J."/>
            <person name="Sheet P."/>
            <person name="Cordes M."/>
            <person name="Abu-Threideh J."/>
            <person name="Stoneking T."/>
            <person name="Kalicki J."/>
            <person name="Graves T."/>
            <person name="Harmon G."/>
            <person name="Edwards J."/>
            <person name="Latreille P."/>
            <person name="Courtney L."/>
            <person name="Cloud J."/>
            <person name="Abbott A."/>
            <person name="Scott K."/>
            <person name="Johnson D."/>
            <person name="Minx P."/>
            <person name="Bentley D."/>
            <person name="Fulton B."/>
            <person name="Miller N."/>
            <person name="Greco T."/>
            <person name="Kemp K."/>
            <person name="Kramer J."/>
            <person name="Fulton L."/>
            <person name="Mardis E."/>
            <person name="Dante M."/>
            <person name="Pepin K."/>
            <person name="Hillier L.W."/>
            <person name="Nelson J."/>
            <person name="Spieth J."/>
            <person name="Ryan E."/>
            <person name="Andrews S."/>
            <person name="Geisel C."/>
            <person name="Layman D."/>
            <person name="Du H."/>
            <person name="Ali J."/>
            <person name="Berghoff A."/>
            <person name="Jones K."/>
            <person name="Drone K."/>
            <person name="Cotton M."/>
            <person name="Joshu C."/>
            <person name="Antonoiu B."/>
            <person name="Zidanic M."/>
            <person name="Strong C."/>
            <person name="Sun H."/>
            <person name="Lamar B."/>
            <person name="Yordan C."/>
            <person name="Ma P."/>
            <person name="Zhong J."/>
            <person name="Preston R."/>
            <person name="Vil D."/>
            <person name="Shekher M."/>
            <person name="Matero A."/>
            <person name="Shah R."/>
            <person name="Swaby I.K."/>
            <person name="O'Shaughnessy A."/>
            <person name="Rodriguez M."/>
            <person name="Hoffman J."/>
            <person name="Till S."/>
            <person name="Granat S."/>
            <person name="Shohdy N."/>
            <person name="Hasegawa A."/>
            <person name="Hameed A."/>
            <person name="Lodhi M."/>
            <person name="Johnson A."/>
            <person name="Chen E."/>
            <person name="Marra M.A."/>
            <person name="Martienssen R."/>
            <person name="McCombie W.R."/>
        </authorList>
    </citation>
    <scope>NUCLEOTIDE SEQUENCE [LARGE SCALE GENOMIC DNA]</scope>
    <source>
        <strain>cv. Columbia</strain>
    </source>
</reference>
<reference key="4">
    <citation type="journal article" date="2017" name="Plant J.">
        <title>Araport11: a complete reannotation of the Arabidopsis thaliana reference genome.</title>
        <authorList>
            <person name="Cheng C.Y."/>
            <person name="Krishnakumar V."/>
            <person name="Chan A.P."/>
            <person name="Thibaud-Nissen F."/>
            <person name="Schobel S."/>
            <person name="Town C.D."/>
        </authorList>
    </citation>
    <scope>GENOME REANNOTATION</scope>
    <source>
        <strain>cv. Columbia</strain>
    </source>
</reference>
<reference key="5">
    <citation type="submission" date="2002-03" db="EMBL/GenBank/DDBJ databases">
        <title>Full-length cDNA from Arabidopsis thaliana.</title>
        <authorList>
            <person name="Brover V.V."/>
            <person name="Troukhan M.E."/>
            <person name="Alexandrov N.A."/>
            <person name="Lu Y.-P."/>
            <person name="Flavell R.B."/>
            <person name="Feldmann K.A."/>
        </authorList>
    </citation>
    <scope>NUCLEOTIDE SEQUENCE [LARGE SCALE MRNA]</scope>
</reference>
<reference key="6">
    <citation type="submission" date="2005-03" db="EMBL/GenBank/DDBJ databases">
        <title>Large-scale analysis of RIKEN Arabidopsis full-length (RAFL) cDNAs.</title>
        <authorList>
            <person name="Totoki Y."/>
            <person name="Seki M."/>
            <person name="Ishida J."/>
            <person name="Nakajima M."/>
            <person name="Enju A."/>
            <person name="Kamiya A."/>
            <person name="Narusaka M."/>
            <person name="Shin-i T."/>
            <person name="Nakagawa M."/>
            <person name="Sakamoto N."/>
            <person name="Oishi K."/>
            <person name="Kohara Y."/>
            <person name="Kobayashi M."/>
            <person name="Toyoda A."/>
            <person name="Sakaki Y."/>
            <person name="Sakurai T."/>
            <person name="Iida K."/>
            <person name="Akiyama K."/>
            <person name="Satou M."/>
            <person name="Toyoda T."/>
            <person name="Konagaya A."/>
            <person name="Carninci P."/>
            <person name="Kawai J."/>
            <person name="Hayashizaki Y."/>
            <person name="Shinozaki K."/>
        </authorList>
    </citation>
    <scope>NUCLEOTIDE SEQUENCE [LARGE SCALE MRNA]</scope>
    <source>
        <strain>cv. Columbia</strain>
    </source>
</reference>
<reference key="7">
    <citation type="journal article" date="2004" name="Plant J.">
        <title>Molecular dissection of plant cytokinesis and phragmoplast structure: a survey of GFP-tagged proteins.</title>
        <authorList>
            <person name="Van Damme D."/>
            <person name="Bouget F.-Y."/>
            <person name="Van Poucke K."/>
            <person name="Inze D."/>
            <person name="Geelen D."/>
        </authorList>
    </citation>
    <scope>SUBCELLULAR LOCATION</scope>
</reference>
<reference key="8">
    <citation type="journal article" date="2012" name="New Phytol.">
        <title>Plant Aurora kinases play a role in maintenance of primary meristems and control of endoreduplication.</title>
        <authorList>
            <person name="Petrovska B."/>
            <person name="Cenklova V."/>
            <person name="Pochylova Z."/>
            <person name="Kourova H."/>
            <person name="Doskocilova A."/>
            <person name="Plihal O."/>
            <person name="Binarova L."/>
            <person name="Binarova P."/>
        </authorList>
    </citation>
    <scope>FUNCTION</scope>
    <scope>SUBCELLULAR LOCATION</scope>
    <scope>INTERACTION WITH TPX2</scope>
</reference>
<sequence length="294" mass="33972">MAIPTETQHQEKEASDASAAAAQKRWTLSDFDIGKPLGRGKFGHVYLAREKRSNHVVALKVLFKSQLQQSQVEHQLRREVEIQSHLRHPNILRLYGYFYDQKRVYLILEYAARGELYKDLQKCKYFSERRAATYVASLARALIYCHGKHVIHRDIKPENLLIGAQGELKIADFGWSVHTFNRRRTMCGTLDYLPPEMVESVEHDASVDIWSLGILCYEFLYGVPPFEAMEHSDTYRRIVQVDLKFPPKPIISASAKDLISQMLVKESSQRLPLHKLLEHPWIVQNADPSGIYRV</sequence>
<keyword id="KW-0067">ATP-binding</keyword>
<keyword id="KW-0131">Cell cycle</keyword>
<keyword id="KW-0132">Cell division</keyword>
<keyword id="KW-0963">Cytoplasm</keyword>
<keyword id="KW-0206">Cytoskeleton</keyword>
<keyword id="KW-0418">Kinase</keyword>
<keyword id="KW-0472">Membrane</keyword>
<keyword id="KW-0493">Microtubule</keyword>
<keyword id="KW-0498">Mitosis</keyword>
<keyword id="KW-0547">Nucleotide-binding</keyword>
<keyword id="KW-0539">Nucleus</keyword>
<keyword id="KW-0597">Phosphoprotein</keyword>
<keyword id="KW-1185">Reference proteome</keyword>
<keyword id="KW-0723">Serine/threonine-protein kinase</keyword>
<keyword id="KW-0808">Transferase</keyword>
<organism>
    <name type="scientific">Arabidopsis thaliana</name>
    <name type="common">Mouse-ear cress</name>
    <dbReference type="NCBI Taxonomy" id="3702"/>
    <lineage>
        <taxon>Eukaryota</taxon>
        <taxon>Viridiplantae</taxon>
        <taxon>Streptophyta</taxon>
        <taxon>Embryophyta</taxon>
        <taxon>Tracheophyta</taxon>
        <taxon>Spermatophyta</taxon>
        <taxon>Magnoliopsida</taxon>
        <taxon>eudicotyledons</taxon>
        <taxon>Gunneridae</taxon>
        <taxon>Pentapetalae</taxon>
        <taxon>rosids</taxon>
        <taxon>malvids</taxon>
        <taxon>Brassicales</taxon>
        <taxon>Brassicaceae</taxon>
        <taxon>Camelineae</taxon>
        <taxon>Arabidopsis</taxon>
    </lineage>
</organism>